<proteinExistence type="inferred from homology"/>
<comment type="function">
    <text evidence="1">Methyltransferase involved in ribosomal biogenesis. Specifically catalyzes the N1-methylation of the pseudouridine corresponding to position 914 in M.jannaschii 16S rRNA.</text>
</comment>
<comment type="catalytic activity">
    <reaction evidence="1">
        <text>a pseudouridine in rRNA + S-adenosyl-L-methionine = an N(1)-methylpseudouridine in rRNA + S-adenosyl-L-homocysteine + H(+)</text>
        <dbReference type="Rhea" id="RHEA:46696"/>
        <dbReference type="Rhea" id="RHEA-COMP:11634"/>
        <dbReference type="Rhea" id="RHEA-COMP:13933"/>
        <dbReference type="ChEBI" id="CHEBI:15378"/>
        <dbReference type="ChEBI" id="CHEBI:57856"/>
        <dbReference type="ChEBI" id="CHEBI:59789"/>
        <dbReference type="ChEBI" id="CHEBI:65314"/>
        <dbReference type="ChEBI" id="CHEBI:74890"/>
    </reaction>
</comment>
<comment type="subunit">
    <text evidence="1">Homodimer.</text>
</comment>
<comment type="similarity">
    <text evidence="2">Belongs to the class IV-like SAM-binding methyltransferase superfamily. RNA methyltransferase NEP1 family.</text>
</comment>
<accession>A0B5L3</accession>
<evidence type="ECO:0000255" key="1">
    <source>
        <dbReference type="HAMAP-Rule" id="MF_00554"/>
    </source>
</evidence>
<evidence type="ECO:0000305" key="2"/>
<reference key="1">
    <citation type="submission" date="2006-10" db="EMBL/GenBank/DDBJ databases">
        <title>Complete sequence of Methanosaeta thermophila PT.</title>
        <authorList>
            <consortium name="US DOE Joint Genome Institute"/>
            <person name="Copeland A."/>
            <person name="Lucas S."/>
            <person name="Lapidus A."/>
            <person name="Barry K."/>
            <person name="Detter J.C."/>
            <person name="Glavina del Rio T."/>
            <person name="Hammon N."/>
            <person name="Israni S."/>
            <person name="Pitluck S."/>
            <person name="Chain P."/>
            <person name="Malfatti S."/>
            <person name="Shin M."/>
            <person name="Vergez L."/>
            <person name="Schmutz J."/>
            <person name="Larimer F."/>
            <person name="Land M."/>
            <person name="Hauser L."/>
            <person name="Kyrpides N."/>
            <person name="Kim E."/>
            <person name="Smith K.S."/>
            <person name="Ingram-Smith C."/>
            <person name="Richardson P."/>
        </authorList>
    </citation>
    <scope>NUCLEOTIDE SEQUENCE [LARGE SCALE GENOMIC DNA]</scope>
    <source>
        <strain>DSM 6194 / JCM 14653 / NBRC 101360 / PT</strain>
    </source>
</reference>
<protein>
    <recommendedName>
        <fullName evidence="1">Ribosomal RNA small subunit methyltransferase Nep1</fullName>
        <ecNumber evidence="1">2.1.1.-</ecNumber>
    </recommendedName>
    <alternativeName>
        <fullName evidence="1">16S rRNA (pseudouridine-N1-)-methyltransferase Nep1</fullName>
    </alternativeName>
</protein>
<feature type="chain" id="PRO_1000017927" description="Ribosomal RNA small subunit methyltransferase Nep1">
    <location>
        <begin position="1"/>
        <end position="226"/>
    </location>
</feature>
<feature type="binding site" evidence="1">
    <location>
        <position position="176"/>
    </location>
    <ligand>
        <name>S-adenosyl-L-methionine</name>
        <dbReference type="ChEBI" id="CHEBI:59789"/>
    </ligand>
</feature>
<feature type="binding site" evidence="1">
    <location>
        <position position="181"/>
    </location>
    <ligand>
        <name>S-adenosyl-L-methionine</name>
        <dbReference type="ChEBI" id="CHEBI:59789"/>
    </ligand>
</feature>
<feature type="binding site" evidence="1">
    <location>
        <begin position="197"/>
        <end position="202"/>
    </location>
    <ligand>
        <name>S-adenosyl-L-methionine</name>
        <dbReference type="ChEBI" id="CHEBI:59789"/>
    </ligand>
</feature>
<feature type="site" description="Interaction with substrate rRNA" evidence="1">
    <location>
        <position position="60"/>
    </location>
</feature>
<feature type="site" description="Stabilizes Arg-60" evidence="1">
    <location>
        <position position="62"/>
    </location>
</feature>
<feature type="site" description="Interaction with substrate rRNA" evidence="1">
    <location>
        <position position="101"/>
    </location>
</feature>
<feature type="site" description="Interaction with substrate rRNA" evidence="1">
    <location>
        <position position="104"/>
    </location>
</feature>
<feature type="site" description="Interaction with substrate rRNA" evidence="1">
    <location>
        <position position="108"/>
    </location>
</feature>
<gene>
    <name evidence="1" type="primary">nep1</name>
    <name type="ordered locus">Mthe_0188</name>
</gene>
<organism>
    <name type="scientific">Methanothrix thermoacetophila (strain DSM 6194 / JCM 14653 / NBRC 101360 / PT)</name>
    <name type="common">Methanosaeta thermophila</name>
    <dbReference type="NCBI Taxonomy" id="349307"/>
    <lineage>
        <taxon>Archaea</taxon>
        <taxon>Methanobacteriati</taxon>
        <taxon>Methanobacteriota</taxon>
        <taxon>Stenosarchaea group</taxon>
        <taxon>Methanomicrobia</taxon>
        <taxon>Methanotrichales</taxon>
        <taxon>Methanotrichaceae</taxon>
        <taxon>Methanothrix</taxon>
    </lineage>
</organism>
<dbReference type="EC" id="2.1.1.-" evidence="1"/>
<dbReference type="EMBL" id="CP000477">
    <property type="protein sequence ID" value="ABK13987.1"/>
    <property type="molecule type" value="Genomic_DNA"/>
</dbReference>
<dbReference type="RefSeq" id="WP_011695386.1">
    <property type="nucleotide sequence ID" value="NC_008553.1"/>
</dbReference>
<dbReference type="SMR" id="A0B5L3"/>
<dbReference type="STRING" id="349307.Mthe_0188"/>
<dbReference type="GeneID" id="4462755"/>
<dbReference type="KEGG" id="mtp:Mthe_0188"/>
<dbReference type="HOGENOM" id="CLU_055846_1_3_2"/>
<dbReference type="OrthoDB" id="7612at2157"/>
<dbReference type="Proteomes" id="UP000000674">
    <property type="component" value="Chromosome"/>
</dbReference>
<dbReference type="GO" id="GO:0070037">
    <property type="term" value="F:rRNA (pseudouridine) methyltransferase activity"/>
    <property type="evidence" value="ECO:0007669"/>
    <property type="project" value="UniProtKB-UniRule"/>
</dbReference>
<dbReference type="GO" id="GO:0019843">
    <property type="term" value="F:rRNA binding"/>
    <property type="evidence" value="ECO:0007669"/>
    <property type="project" value="UniProtKB-UniRule"/>
</dbReference>
<dbReference type="GO" id="GO:0070475">
    <property type="term" value="P:rRNA base methylation"/>
    <property type="evidence" value="ECO:0007669"/>
    <property type="project" value="InterPro"/>
</dbReference>
<dbReference type="CDD" id="cd18088">
    <property type="entry name" value="Nep1-like"/>
    <property type="match status" value="1"/>
</dbReference>
<dbReference type="Gene3D" id="3.40.1280.10">
    <property type="match status" value="1"/>
</dbReference>
<dbReference type="HAMAP" id="MF_00554">
    <property type="entry name" value="NEP1"/>
    <property type="match status" value="1"/>
</dbReference>
<dbReference type="InterPro" id="IPR029028">
    <property type="entry name" value="Alpha/beta_knot_MTases"/>
</dbReference>
<dbReference type="InterPro" id="IPR005304">
    <property type="entry name" value="Rbsml_bgen_MeTrfase_EMG1/NEP1"/>
</dbReference>
<dbReference type="InterPro" id="IPR023503">
    <property type="entry name" value="Ribosome_NEP1_arc"/>
</dbReference>
<dbReference type="InterPro" id="IPR029026">
    <property type="entry name" value="tRNA_m1G_MTases_N"/>
</dbReference>
<dbReference type="NCBIfam" id="NF003207">
    <property type="entry name" value="PRK04171.2-2"/>
    <property type="match status" value="1"/>
</dbReference>
<dbReference type="PANTHER" id="PTHR12636">
    <property type="entry name" value="NEP1/MRA1"/>
    <property type="match status" value="1"/>
</dbReference>
<dbReference type="PANTHER" id="PTHR12636:SF5">
    <property type="entry name" value="RIBOSOMAL RNA SMALL SUBUNIT METHYLTRANSFERASE NEP1"/>
    <property type="match status" value="1"/>
</dbReference>
<dbReference type="Pfam" id="PF03587">
    <property type="entry name" value="EMG1"/>
    <property type="match status" value="1"/>
</dbReference>
<dbReference type="SUPFAM" id="SSF75217">
    <property type="entry name" value="alpha/beta knot"/>
    <property type="match status" value="1"/>
</dbReference>
<sequence length="226" mass="25401">MISMLLADSELELVPREIVGYPAVRLNARKRNKSPAKSILDASLHHSAMRALPMGDRRGRPDIVHVFLLVALESVLNRVGQLRVYIHTRNNEMITIDPTTRIPKNYPRFVGLMESLFEKGSVPEREPLIVMQRDRDIGACIGEIPHEKVILLSPKGRRVRLSDYVKECDNALFILGGFPKGEFISDVLSEADDTISIYEESLSVWTVASEILVNYENHVLEASAPS</sequence>
<keyword id="KW-0489">Methyltransferase</keyword>
<keyword id="KW-1185">Reference proteome</keyword>
<keyword id="KW-0690">Ribosome biogenesis</keyword>
<keyword id="KW-0694">RNA-binding</keyword>
<keyword id="KW-0698">rRNA processing</keyword>
<keyword id="KW-0699">rRNA-binding</keyword>
<keyword id="KW-0949">S-adenosyl-L-methionine</keyword>
<keyword id="KW-0808">Transferase</keyword>
<name>NEP1_METTP</name>